<gene>
    <name evidence="1" type="primary">astB</name>
    <name type="ordered locus">MXAN_1056</name>
</gene>
<proteinExistence type="inferred from homology"/>
<reference key="1">
    <citation type="journal article" date="2006" name="Proc. Natl. Acad. Sci. U.S.A.">
        <title>Evolution of sensory complexity recorded in a myxobacterial genome.</title>
        <authorList>
            <person name="Goldman B.S."/>
            <person name="Nierman W.C."/>
            <person name="Kaiser D."/>
            <person name="Slater S.C."/>
            <person name="Durkin A.S."/>
            <person name="Eisen J.A."/>
            <person name="Ronning C.M."/>
            <person name="Barbazuk W.B."/>
            <person name="Blanchard M."/>
            <person name="Field C."/>
            <person name="Halling C."/>
            <person name="Hinkle G."/>
            <person name="Iartchuk O."/>
            <person name="Kim H.S."/>
            <person name="Mackenzie C."/>
            <person name="Madupu R."/>
            <person name="Miller N."/>
            <person name="Shvartsbeyn A."/>
            <person name="Sullivan S.A."/>
            <person name="Vaudin M."/>
            <person name="Wiegand R."/>
            <person name="Kaplan H.B."/>
        </authorList>
    </citation>
    <scope>NUCLEOTIDE SEQUENCE [LARGE SCALE GENOMIC DNA]</scope>
    <source>
        <strain>DK1622</strain>
    </source>
</reference>
<sequence>MREYNFDGLVGPTHNYGGLSPGNLASQSHVGEPSHPRDAALQGLEKMRFVSALGVGQAVLPPQPRPSLHALRALGFTGSDEEVITRAAREAEHLLRLTSSASSMWTANAATVAPSADTADGRVHLTPANLSQMYHRAIEAETTHSVLRAIFSNEKYFAVHAPLPGSGHFADEGAANHTRLATPGHAGVHLLAWGRSAWQDVQGPSRFPARQTLEASQALARLHQLDAKSVLFPQQHPEGIDAGAFHTDVLAVGNERFLMLHELAFVDHAGLLAVLREKLGQDFRAVVATKAELPAKDAVKAYPFNSQVLTLPDGTMAIVAPIESRETPAARQFLERVVAEDTPVKAVHYLDVRQSMNNGGGPACLRQRVWLTDEERGAIKADVFYTPALHDSLAGWVRRHYREVLRPKDLQDPQLARETMTALDELTRILNLGSVYDFQR</sequence>
<comment type="function">
    <text evidence="1">Catalyzes the hydrolysis of N(2)-succinylarginine into N(2)-succinylornithine, ammonia and CO(2).</text>
</comment>
<comment type="catalytic activity">
    <reaction evidence="1">
        <text>N(2)-succinyl-L-arginine + 2 H2O + 2 H(+) = N(2)-succinyl-L-ornithine + 2 NH4(+) + CO2</text>
        <dbReference type="Rhea" id="RHEA:19533"/>
        <dbReference type="ChEBI" id="CHEBI:15377"/>
        <dbReference type="ChEBI" id="CHEBI:15378"/>
        <dbReference type="ChEBI" id="CHEBI:16526"/>
        <dbReference type="ChEBI" id="CHEBI:28938"/>
        <dbReference type="ChEBI" id="CHEBI:58241"/>
        <dbReference type="ChEBI" id="CHEBI:58514"/>
        <dbReference type="EC" id="3.5.3.23"/>
    </reaction>
</comment>
<comment type="pathway">
    <text evidence="1">Amino-acid degradation; L-arginine degradation via AST pathway; L-glutamate and succinate from L-arginine: step 2/5.</text>
</comment>
<comment type="subunit">
    <text evidence="1">Homodimer.</text>
</comment>
<comment type="similarity">
    <text evidence="1">Belongs to the succinylarginine dihydrolase family.</text>
</comment>
<name>ASTB_MYXXD</name>
<dbReference type="EC" id="3.5.3.23" evidence="1"/>
<dbReference type="EMBL" id="CP000113">
    <property type="protein sequence ID" value="ABF87851.1"/>
    <property type="molecule type" value="Genomic_DNA"/>
</dbReference>
<dbReference type="RefSeq" id="WP_011551177.1">
    <property type="nucleotide sequence ID" value="NC_008095.1"/>
</dbReference>
<dbReference type="SMR" id="Q1DDF6"/>
<dbReference type="STRING" id="246197.MXAN_1056"/>
<dbReference type="EnsemblBacteria" id="ABF87851">
    <property type="protein sequence ID" value="ABF87851"/>
    <property type="gene ID" value="MXAN_1056"/>
</dbReference>
<dbReference type="GeneID" id="41358509"/>
<dbReference type="KEGG" id="mxa:MXAN_1056"/>
<dbReference type="eggNOG" id="COG3724">
    <property type="taxonomic scope" value="Bacteria"/>
</dbReference>
<dbReference type="HOGENOM" id="CLU_053835_0_0_7"/>
<dbReference type="OrthoDB" id="248552at2"/>
<dbReference type="UniPathway" id="UPA00185">
    <property type="reaction ID" value="UER00280"/>
</dbReference>
<dbReference type="Proteomes" id="UP000002402">
    <property type="component" value="Chromosome"/>
</dbReference>
<dbReference type="GO" id="GO:0009015">
    <property type="term" value="F:N-succinylarginine dihydrolase activity"/>
    <property type="evidence" value="ECO:0007669"/>
    <property type="project" value="UniProtKB-EC"/>
</dbReference>
<dbReference type="GO" id="GO:0019545">
    <property type="term" value="P:arginine catabolic process to succinate"/>
    <property type="evidence" value="ECO:0007669"/>
    <property type="project" value="UniProtKB-UniPathway"/>
</dbReference>
<dbReference type="Gene3D" id="3.75.10.20">
    <property type="entry name" value="Succinylarginine dihydrolase"/>
    <property type="match status" value="1"/>
</dbReference>
<dbReference type="HAMAP" id="MF_01172">
    <property type="entry name" value="AstB"/>
    <property type="match status" value="1"/>
</dbReference>
<dbReference type="InterPro" id="IPR037031">
    <property type="entry name" value="AstB_sf"/>
</dbReference>
<dbReference type="InterPro" id="IPR007079">
    <property type="entry name" value="SuccinylArg_d-Hdrlase_AstB"/>
</dbReference>
<dbReference type="NCBIfam" id="TIGR03241">
    <property type="entry name" value="arg_catab_astB"/>
    <property type="match status" value="1"/>
</dbReference>
<dbReference type="NCBIfam" id="NF009789">
    <property type="entry name" value="PRK13281.1"/>
    <property type="match status" value="1"/>
</dbReference>
<dbReference type="PANTHER" id="PTHR30420">
    <property type="entry name" value="N-SUCCINYLARGININE DIHYDROLASE"/>
    <property type="match status" value="1"/>
</dbReference>
<dbReference type="PANTHER" id="PTHR30420:SF2">
    <property type="entry name" value="N-SUCCINYLARGININE DIHYDROLASE"/>
    <property type="match status" value="1"/>
</dbReference>
<dbReference type="Pfam" id="PF04996">
    <property type="entry name" value="AstB"/>
    <property type="match status" value="1"/>
</dbReference>
<dbReference type="SUPFAM" id="SSF55909">
    <property type="entry name" value="Pentein"/>
    <property type="match status" value="1"/>
</dbReference>
<feature type="chain" id="PRO_0000262358" description="N-succinylarginine dihydrolase">
    <location>
        <begin position="1"/>
        <end position="440"/>
    </location>
</feature>
<feature type="region of interest" description="Disordered" evidence="2">
    <location>
        <begin position="17"/>
        <end position="37"/>
    </location>
</feature>
<feature type="active site" evidence="1">
    <location>
        <position position="172"/>
    </location>
</feature>
<feature type="active site" evidence="1">
    <location>
        <position position="246"/>
    </location>
</feature>
<feature type="active site" description="Nucleophile" evidence="1">
    <location>
        <position position="364"/>
    </location>
</feature>
<feature type="binding site" evidence="1">
    <location>
        <begin position="17"/>
        <end position="26"/>
    </location>
    <ligand>
        <name>substrate</name>
    </ligand>
</feature>
<feature type="binding site" evidence="1">
    <location>
        <position position="108"/>
    </location>
    <ligand>
        <name>substrate</name>
    </ligand>
</feature>
<feature type="binding site" evidence="1">
    <location>
        <begin position="135"/>
        <end position="136"/>
    </location>
    <ligand>
        <name>substrate</name>
    </ligand>
</feature>
<feature type="binding site" evidence="1">
    <location>
        <position position="210"/>
    </location>
    <ligand>
        <name>substrate</name>
    </ligand>
</feature>
<feature type="binding site" evidence="1">
    <location>
        <position position="248"/>
    </location>
    <ligand>
        <name>substrate</name>
    </ligand>
</feature>
<feature type="binding site" evidence="1">
    <location>
        <position position="358"/>
    </location>
    <ligand>
        <name>substrate</name>
    </ligand>
</feature>
<accession>Q1DDF6</accession>
<protein>
    <recommendedName>
        <fullName evidence="1">N-succinylarginine dihydrolase</fullName>
        <ecNumber evidence="1">3.5.3.23</ecNumber>
    </recommendedName>
</protein>
<keyword id="KW-0056">Arginine metabolism</keyword>
<keyword id="KW-0378">Hydrolase</keyword>
<keyword id="KW-1185">Reference proteome</keyword>
<evidence type="ECO:0000255" key="1">
    <source>
        <dbReference type="HAMAP-Rule" id="MF_01172"/>
    </source>
</evidence>
<evidence type="ECO:0000256" key="2">
    <source>
        <dbReference type="SAM" id="MobiDB-lite"/>
    </source>
</evidence>
<organism>
    <name type="scientific">Myxococcus xanthus (strain DK1622)</name>
    <dbReference type="NCBI Taxonomy" id="246197"/>
    <lineage>
        <taxon>Bacteria</taxon>
        <taxon>Pseudomonadati</taxon>
        <taxon>Myxococcota</taxon>
        <taxon>Myxococcia</taxon>
        <taxon>Myxococcales</taxon>
        <taxon>Cystobacterineae</taxon>
        <taxon>Myxococcaceae</taxon>
        <taxon>Myxococcus</taxon>
    </lineage>
</organism>